<reference key="1">
    <citation type="journal article" date="2004" name="Nature">
        <title>Genome evolution in yeasts.</title>
        <authorList>
            <person name="Dujon B."/>
            <person name="Sherman D."/>
            <person name="Fischer G."/>
            <person name="Durrens P."/>
            <person name="Casaregola S."/>
            <person name="Lafontaine I."/>
            <person name="de Montigny J."/>
            <person name="Marck C."/>
            <person name="Neuveglise C."/>
            <person name="Talla E."/>
            <person name="Goffard N."/>
            <person name="Frangeul L."/>
            <person name="Aigle M."/>
            <person name="Anthouard V."/>
            <person name="Babour A."/>
            <person name="Barbe V."/>
            <person name="Barnay S."/>
            <person name="Blanchin S."/>
            <person name="Beckerich J.-M."/>
            <person name="Beyne E."/>
            <person name="Bleykasten C."/>
            <person name="Boisrame A."/>
            <person name="Boyer J."/>
            <person name="Cattolico L."/>
            <person name="Confanioleri F."/>
            <person name="de Daruvar A."/>
            <person name="Despons L."/>
            <person name="Fabre E."/>
            <person name="Fairhead C."/>
            <person name="Ferry-Dumazet H."/>
            <person name="Groppi A."/>
            <person name="Hantraye F."/>
            <person name="Hennequin C."/>
            <person name="Jauniaux N."/>
            <person name="Joyet P."/>
            <person name="Kachouri R."/>
            <person name="Kerrest A."/>
            <person name="Koszul R."/>
            <person name="Lemaire M."/>
            <person name="Lesur I."/>
            <person name="Ma L."/>
            <person name="Muller H."/>
            <person name="Nicaud J.-M."/>
            <person name="Nikolski M."/>
            <person name="Oztas S."/>
            <person name="Ozier-Kalogeropoulos O."/>
            <person name="Pellenz S."/>
            <person name="Potier S."/>
            <person name="Richard G.-F."/>
            <person name="Straub M.-L."/>
            <person name="Suleau A."/>
            <person name="Swennen D."/>
            <person name="Tekaia F."/>
            <person name="Wesolowski-Louvel M."/>
            <person name="Westhof E."/>
            <person name="Wirth B."/>
            <person name="Zeniou-Meyer M."/>
            <person name="Zivanovic Y."/>
            <person name="Bolotin-Fukuhara M."/>
            <person name="Thierry A."/>
            <person name="Bouchier C."/>
            <person name="Caudron B."/>
            <person name="Scarpelli C."/>
            <person name="Gaillardin C."/>
            <person name="Weissenbach J."/>
            <person name="Wincker P."/>
            <person name="Souciet J.-L."/>
        </authorList>
    </citation>
    <scope>NUCLEOTIDE SEQUENCE [LARGE SCALE GENOMIC DNA]</scope>
    <source>
        <strain>ATCC 2001 / BCRC 20586 / JCM 3761 / NBRC 0622 / NRRL Y-65 / CBS 138</strain>
    </source>
</reference>
<sequence length="280" mass="31320">MSLSEAEKRKILRERRQQKFSRGGASERLNKIVGGQGSQLDTKSALDEKPEVVEEIPREAVKPEMNSSVQAKKESTAQAKAEDPQVELFRQLAEMQGQGATESTPDLFSMMKNLGATGDSPFPMAEQQVEAIDPELVEYHKYRVNTLTAKTTLVKWIVLLAYIFLLTRTDDTYFPFVVRSYLPEVFTSQSSFFSIFLTFEILATSIYYQLSVGVERETGVKTLQDTSKIVSLVSMVPEGILPIADLRGKVILAMKYWNIIAMMIGDVCFVLVAIGLVSQI</sequence>
<protein>
    <recommendedName>
        <fullName evidence="1">Golgi to ER traffic protein 2</fullName>
    </recommendedName>
</protein>
<dbReference type="EMBL" id="CR380956">
    <property type="protein sequence ID" value="CAG60800.1"/>
    <property type="molecule type" value="Genomic_DNA"/>
</dbReference>
<dbReference type="RefSeq" id="XP_447851.1">
    <property type="nucleotide sequence ID" value="XM_447851.1"/>
</dbReference>
<dbReference type="SMR" id="Q6FPJ3"/>
<dbReference type="FunCoup" id="Q6FPJ3">
    <property type="interactions" value="67"/>
</dbReference>
<dbReference type="STRING" id="284593.Q6FPJ3"/>
<dbReference type="EnsemblFungi" id="CAGL0J03366g-T">
    <property type="protein sequence ID" value="CAGL0J03366g-T-p1"/>
    <property type="gene ID" value="CAGL0J03366g"/>
</dbReference>
<dbReference type="GeneID" id="2889691"/>
<dbReference type="KEGG" id="cgr:2889691"/>
<dbReference type="CGD" id="CAL0133030">
    <property type="gene designation" value="GET2"/>
</dbReference>
<dbReference type="VEuPathDB" id="FungiDB:CAGL0J03366g"/>
<dbReference type="eggNOG" id="ENOG502QW0H">
    <property type="taxonomic scope" value="Eukaryota"/>
</dbReference>
<dbReference type="HOGENOM" id="CLU_066477_0_0_1"/>
<dbReference type="InParanoid" id="Q6FPJ3"/>
<dbReference type="OMA" id="QYWDVLS"/>
<dbReference type="Proteomes" id="UP000002428">
    <property type="component" value="Chromosome J"/>
</dbReference>
<dbReference type="GO" id="GO:0005789">
    <property type="term" value="C:endoplasmic reticulum membrane"/>
    <property type="evidence" value="ECO:0007669"/>
    <property type="project" value="UniProtKB-SubCell"/>
</dbReference>
<dbReference type="GO" id="GO:0043529">
    <property type="term" value="C:GET complex"/>
    <property type="evidence" value="ECO:0007669"/>
    <property type="project" value="UniProtKB-UniRule"/>
</dbReference>
<dbReference type="GO" id="GO:0000139">
    <property type="term" value="C:Golgi membrane"/>
    <property type="evidence" value="ECO:0007669"/>
    <property type="project" value="UniProtKB-SubCell"/>
</dbReference>
<dbReference type="GO" id="GO:0032977">
    <property type="term" value="F:membrane insertase activity"/>
    <property type="evidence" value="ECO:0007669"/>
    <property type="project" value="EnsemblFungi"/>
</dbReference>
<dbReference type="GO" id="GO:0008320">
    <property type="term" value="F:protein transmembrane transporter activity"/>
    <property type="evidence" value="ECO:0007669"/>
    <property type="project" value="EnsemblFungi"/>
</dbReference>
<dbReference type="GO" id="GO:0043495">
    <property type="term" value="F:protein-membrane adaptor activity"/>
    <property type="evidence" value="ECO:0007669"/>
    <property type="project" value="EnsemblFungi"/>
</dbReference>
<dbReference type="GO" id="GO:0097051">
    <property type="term" value="P:establishment of protein localization to endoplasmic reticulum membrane"/>
    <property type="evidence" value="ECO:0007669"/>
    <property type="project" value="EnsemblFungi"/>
</dbReference>
<dbReference type="GO" id="GO:0000423">
    <property type="term" value="P:mitophagy"/>
    <property type="evidence" value="ECO:0007669"/>
    <property type="project" value="EnsemblFungi"/>
</dbReference>
<dbReference type="GO" id="GO:0006890">
    <property type="term" value="P:retrograde vesicle-mediated transport, Golgi to endoplasmic reticulum"/>
    <property type="evidence" value="ECO:0007669"/>
    <property type="project" value="EnsemblFungi"/>
</dbReference>
<dbReference type="GO" id="GO:0071816">
    <property type="term" value="P:tail-anchored membrane protein insertion into ER membrane"/>
    <property type="evidence" value="ECO:0007669"/>
    <property type="project" value="EnsemblFungi"/>
</dbReference>
<dbReference type="HAMAP" id="MF_03114">
    <property type="entry name" value="Get2"/>
    <property type="match status" value="1"/>
</dbReference>
<dbReference type="InterPro" id="IPR014802">
    <property type="entry name" value="GET2"/>
</dbReference>
<dbReference type="InterPro" id="IPR028143">
    <property type="entry name" value="Get2/sif1"/>
</dbReference>
<dbReference type="PANTHER" id="PTHR28263">
    <property type="entry name" value="GOLGI TO ER TRAFFIC PROTEIN 2"/>
    <property type="match status" value="1"/>
</dbReference>
<dbReference type="PANTHER" id="PTHR28263:SF1">
    <property type="entry name" value="GOLGI TO ER TRAFFIC PROTEIN 2"/>
    <property type="match status" value="1"/>
</dbReference>
<dbReference type="Pfam" id="PF08690">
    <property type="entry name" value="GET2"/>
    <property type="match status" value="1"/>
</dbReference>
<organism>
    <name type="scientific">Candida glabrata (strain ATCC 2001 / BCRC 20586 / JCM 3761 / NBRC 0622 / NRRL Y-65 / CBS 138)</name>
    <name type="common">Yeast</name>
    <name type="synonym">Nakaseomyces glabratus</name>
    <dbReference type="NCBI Taxonomy" id="284593"/>
    <lineage>
        <taxon>Eukaryota</taxon>
        <taxon>Fungi</taxon>
        <taxon>Dikarya</taxon>
        <taxon>Ascomycota</taxon>
        <taxon>Saccharomycotina</taxon>
        <taxon>Saccharomycetes</taxon>
        <taxon>Saccharomycetales</taxon>
        <taxon>Saccharomycetaceae</taxon>
        <taxon>Nakaseomyces</taxon>
    </lineage>
</organism>
<name>GET2_CANGA</name>
<comment type="function">
    <text evidence="1">Required for the post-translational delivery of tail-anchored (TA) proteins to the endoplasmic reticulum. Together with GET1, acts as a membrane receptor for soluble GET3, which recognizes and selectively binds the transmembrane domain of TA proteins in the cytosol. The GET complex cooperates with the HDEL receptor ERD2 to mediate the ATP-dependent retrieval of resident ER proteins that contain a C-terminal H-D-E-L retention signal from the Golgi to the ER.</text>
</comment>
<comment type="subunit">
    <text evidence="1">Component of the Golgi to ER traffic (GET) complex, which is composed of GET1, GET2 and GET3. Within the complex, GET1 and GET2 form a heterotetramer which is stabilized by phosphatidylinositol binding and which binds to the GET3 homodimer.</text>
</comment>
<comment type="subcellular location">
    <subcellularLocation>
        <location evidence="1">Endoplasmic reticulum membrane</location>
        <topology evidence="1">Multi-pass membrane protein</topology>
    </subcellularLocation>
    <subcellularLocation>
        <location evidence="1">Golgi apparatus membrane</location>
        <topology evidence="1">Multi-pass membrane protein</topology>
    </subcellularLocation>
</comment>
<comment type="similarity">
    <text evidence="1">Belongs to the GET2 family.</text>
</comment>
<keyword id="KW-0256">Endoplasmic reticulum</keyword>
<keyword id="KW-0931">ER-Golgi transport</keyword>
<keyword id="KW-0333">Golgi apparatus</keyword>
<keyword id="KW-0472">Membrane</keyword>
<keyword id="KW-1185">Reference proteome</keyword>
<keyword id="KW-0812">Transmembrane</keyword>
<keyword id="KW-1133">Transmembrane helix</keyword>
<keyword id="KW-0813">Transport</keyword>
<evidence type="ECO:0000255" key="1">
    <source>
        <dbReference type="HAMAP-Rule" id="MF_03114"/>
    </source>
</evidence>
<evidence type="ECO:0000256" key="2">
    <source>
        <dbReference type="SAM" id="MobiDB-lite"/>
    </source>
</evidence>
<feature type="chain" id="PRO_0000388628" description="Golgi to ER traffic protein 2">
    <location>
        <begin position="1"/>
        <end position="280"/>
    </location>
</feature>
<feature type="topological domain" description="Cytoplasmic" evidence="1">
    <location>
        <begin position="1"/>
        <end position="146"/>
    </location>
</feature>
<feature type="transmembrane region" description="Helical" evidence="1">
    <location>
        <begin position="147"/>
        <end position="166"/>
    </location>
</feature>
<feature type="topological domain" description="Lumenal" evidence="1">
    <location>
        <begin position="167"/>
        <end position="191"/>
    </location>
</feature>
<feature type="transmembrane region" description="Helical" evidence="1">
    <location>
        <begin position="192"/>
        <end position="211"/>
    </location>
</feature>
<feature type="topological domain" description="Cytoplasmic" evidence="1">
    <location>
        <begin position="212"/>
        <end position="258"/>
    </location>
</feature>
<feature type="transmembrane region" description="Helical" evidence="1">
    <location>
        <begin position="259"/>
        <end position="279"/>
    </location>
</feature>
<feature type="topological domain" description="Lumenal" evidence="1">
    <location>
        <position position="280"/>
    </location>
</feature>
<feature type="region of interest" description="Disordered" evidence="2">
    <location>
        <begin position="1"/>
        <end position="80"/>
    </location>
</feature>
<feature type="compositionally biased region" description="Basic and acidic residues" evidence="2">
    <location>
        <begin position="1"/>
        <end position="17"/>
    </location>
</feature>
<feature type="compositionally biased region" description="Basic and acidic residues" evidence="2">
    <location>
        <begin position="44"/>
        <end position="62"/>
    </location>
</feature>
<feature type="compositionally biased region" description="Basic and acidic residues" evidence="2">
    <location>
        <begin position="71"/>
        <end position="80"/>
    </location>
</feature>
<accession>Q6FPJ3</accession>
<proteinExistence type="inferred from homology"/>
<gene>
    <name evidence="1" type="primary">GET2</name>
    <name type="ordered locus">CAGL0J03366g</name>
</gene>